<organism>
    <name type="scientific">Leptospira interrogans serogroup Icterohaemorrhagiae serovar copenhageni (strain Fiocruz L1-130)</name>
    <dbReference type="NCBI Taxonomy" id="267671"/>
    <lineage>
        <taxon>Bacteria</taxon>
        <taxon>Pseudomonadati</taxon>
        <taxon>Spirochaetota</taxon>
        <taxon>Spirochaetia</taxon>
        <taxon>Leptospirales</taxon>
        <taxon>Leptospiraceae</taxon>
        <taxon>Leptospira</taxon>
    </lineage>
</organism>
<accession>P62038</accession>
<name>Y2886_LEPIC</name>
<reference key="1">
    <citation type="journal article" date="2004" name="J. Bacteriol.">
        <title>Comparative genomics of two Leptospira interrogans serovars reveals novel insights into physiology and pathogenesis.</title>
        <authorList>
            <person name="Nascimento A.L.T.O."/>
            <person name="Ko A.I."/>
            <person name="Martins E.A.L."/>
            <person name="Monteiro-Vitorello C.B."/>
            <person name="Ho P.L."/>
            <person name="Haake D.A."/>
            <person name="Verjovski-Almeida S."/>
            <person name="Hartskeerl R.A."/>
            <person name="Marques M.V."/>
            <person name="Oliveira M.C."/>
            <person name="Menck C.F.M."/>
            <person name="Leite L.C.C."/>
            <person name="Carrer H."/>
            <person name="Coutinho L.L."/>
            <person name="Degrave W.M."/>
            <person name="Dellagostin O.A."/>
            <person name="El-Dorry H."/>
            <person name="Ferro E.S."/>
            <person name="Ferro M.I.T."/>
            <person name="Furlan L.R."/>
            <person name="Gamberini M."/>
            <person name="Giglioti E.A."/>
            <person name="Goes-Neto A."/>
            <person name="Goldman G.H."/>
            <person name="Goldman M.H.S."/>
            <person name="Harakava R."/>
            <person name="Jeronimo S.M.B."/>
            <person name="Junqueira-de-Azevedo I.L.M."/>
            <person name="Kimura E.T."/>
            <person name="Kuramae E.E."/>
            <person name="Lemos E.G.M."/>
            <person name="Lemos M.V.F."/>
            <person name="Marino C.L."/>
            <person name="Nunes L.R."/>
            <person name="de Oliveira R.C."/>
            <person name="Pereira G.G."/>
            <person name="Reis M.S."/>
            <person name="Schriefer A."/>
            <person name="Siqueira W.J."/>
            <person name="Sommer P."/>
            <person name="Tsai S.M."/>
            <person name="Simpson A.J.G."/>
            <person name="Ferro J.A."/>
            <person name="Camargo L.E.A."/>
            <person name="Kitajima J.P."/>
            <person name="Setubal J.C."/>
            <person name="Van Sluys M.A."/>
        </authorList>
    </citation>
    <scope>NUCLEOTIDE SEQUENCE [LARGE SCALE GENOMIC DNA]</scope>
    <source>
        <strain>Fiocruz L1-130</strain>
    </source>
</reference>
<protein>
    <recommendedName>
        <fullName evidence="1">Probable transcriptional regulatory protein LIC_12886</fullName>
    </recommendedName>
</protein>
<dbReference type="EMBL" id="AE016823">
    <property type="protein sequence ID" value="AAS71439.1"/>
    <property type="molecule type" value="Genomic_DNA"/>
</dbReference>
<dbReference type="RefSeq" id="WP_000014140.1">
    <property type="nucleotide sequence ID" value="NC_005823.1"/>
</dbReference>
<dbReference type="SMR" id="P62038"/>
<dbReference type="KEGG" id="lic:LIC_12886"/>
<dbReference type="HOGENOM" id="CLU_062974_2_2_12"/>
<dbReference type="Proteomes" id="UP000007037">
    <property type="component" value="Chromosome I"/>
</dbReference>
<dbReference type="GO" id="GO:0005829">
    <property type="term" value="C:cytosol"/>
    <property type="evidence" value="ECO:0007669"/>
    <property type="project" value="TreeGrafter"/>
</dbReference>
<dbReference type="GO" id="GO:0003677">
    <property type="term" value="F:DNA binding"/>
    <property type="evidence" value="ECO:0007669"/>
    <property type="project" value="UniProtKB-UniRule"/>
</dbReference>
<dbReference type="GO" id="GO:0006355">
    <property type="term" value="P:regulation of DNA-templated transcription"/>
    <property type="evidence" value="ECO:0007669"/>
    <property type="project" value="UniProtKB-UniRule"/>
</dbReference>
<dbReference type="FunFam" id="1.10.10.200:FF:000002">
    <property type="entry name" value="Probable transcriptional regulatory protein CLM62_37755"/>
    <property type="match status" value="1"/>
</dbReference>
<dbReference type="Gene3D" id="1.10.10.200">
    <property type="match status" value="1"/>
</dbReference>
<dbReference type="Gene3D" id="3.30.70.980">
    <property type="match status" value="2"/>
</dbReference>
<dbReference type="HAMAP" id="MF_00693">
    <property type="entry name" value="Transcrip_reg_TACO1"/>
    <property type="match status" value="1"/>
</dbReference>
<dbReference type="InterPro" id="IPR017856">
    <property type="entry name" value="Integrase-like_N"/>
</dbReference>
<dbReference type="InterPro" id="IPR048300">
    <property type="entry name" value="TACO1_YebC-like_2nd/3rd_dom"/>
</dbReference>
<dbReference type="InterPro" id="IPR049083">
    <property type="entry name" value="TACO1_YebC_N"/>
</dbReference>
<dbReference type="InterPro" id="IPR002876">
    <property type="entry name" value="Transcrip_reg_TACO1-like"/>
</dbReference>
<dbReference type="InterPro" id="IPR026564">
    <property type="entry name" value="Transcrip_reg_TACO1-like_dom3"/>
</dbReference>
<dbReference type="InterPro" id="IPR029072">
    <property type="entry name" value="YebC-like"/>
</dbReference>
<dbReference type="NCBIfam" id="NF001030">
    <property type="entry name" value="PRK00110.1"/>
    <property type="match status" value="1"/>
</dbReference>
<dbReference type="NCBIfam" id="NF009044">
    <property type="entry name" value="PRK12378.1"/>
    <property type="match status" value="1"/>
</dbReference>
<dbReference type="NCBIfam" id="TIGR01033">
    <property type="entry name" value="YebC/PmpR family DNA-binding transcriptional regulator"/>
    <property type="match status" value="1"/>
</dbReference>
<dbReference type="PANTHER" id="PTHR12532:SF6">
    <property type="entry name" value="TRANSCRIPTIONAL REGULATORY PROTEIN YEBC-RELATED"/>
    <property type="match status" value="1"/>
</dbReference>
<dbReference type="PANTHER" id="PTHR12532">
    <property type="entry name" value="TRANSLATIONAL ACTIVATOR OF CYTOCHROME C OXIDASE 1"/>
    <property type="match status" value="1"/>
</dbReference>
<dbReference type="Pfam" id="PF20772">
    <property type="entry name" value="TACO1_YebC_N"/>
    <property type="match status" value="1"/>
</dbReference>
<dbReference type="Pfam" id="PF01709">
    <property type="entry name" value="Transcrip_reg"/>
    <property type="match status" value="1"/>
</dbReference>
<dbReference type="SUPFAM" id="SSF75625">
    <property type="entry name" value="YebC-like"/>
    <property type="match status" value="1"/>
</dbReference>
<comment type="subcellular location">
    <subcellularLocation>
        <location evidence="1">Cytoplasm</location>
    </subcellularLocation>
</comment>
<comment type="similarity">
    <text evidence="1">Belongs to the TACO1 family.</text>
</comment>
<proteinExistence type="inferred from homology"/>
<feature type="chain" id="PRO_0000175832" description="Probable transcriptional regulatory protein LIC_12886">
    <location>
        <begin position="1"/>
        <end position="249"/>
    </location>
</feature>
<sequence>MSGHSKWATIKRKKDAIDSKRGAIFTRVGKEITVAAKMGGGDPEGNPRLRLAILKAKSVNMPKDNIERAIRKGTGELEGVTYEECLYECFGPGGIAIMVSAVTDKKSRTTPEIKSILTKLGGSLATSGSVSRLFEKKGVIVLESSQISEDELVDVAVGGGAEDVINEGDVYRVISVPDNYETVLHALNEKGLKSEESEIRYIPLVSSEIADKEVAEKIMKLIDQLDGHDDVTSVTSNFELASSLEKEFE</sequence>
<gene>
    <name type="ordered locus">LIC_12886</name>
</gene>
<evidence type="ECO:0000255" key="1">
    <source>
        <dbReference type="HAMAP-Rule" id="MF_00693"/>
    </source>
</evidence>
<keyword id="KW-0963">Cytoplasm</keyword>
<keyword id="KW-0238">DNA-binding</keyword>
<keyword id="KW-0804">Transcription</keyword>
<keyword id="KW-0805">Transcription regulation</keyword>